<keyword id="KW-0053">Apoptosis</keyword>
<keyword id="KW-0256">Endoplasmic reticulum</keyword>
<keyword id="KW-0472">Membrane</keyword>
<keyword id="KW-0539">Nucleus</keyword>
<keyword id="KW-1185">Reference proteome</keyword>
<keyword id="KW-0812">Transmembrane</keyword>
<keyword id="KW-1133">Transmembrane helix</keyword>
<dbReference type="EMBL" id="CR857788">
    <property type="protein sequence ID" value="CAH90051.1"/>
    <property type="molecule type" value="mRNA"/>
</dbReference>
<dbReference type="RefSeq" id="NP_001124981.1">
    <property type="nucleotide sequence ID" value="NM_001131509.1"/>
</dbReference>
<dbReference type="SMR" id="Q5RDV6"/>
<dbReference type="STRING" id="9601.ENSPPYP00000015550"/>
<dbReference type="Ensembl" id="ENSPPYT00000035961.1">
    <property type="protein sequence ID" value="ENSPPYP00000029785.1"/>
    <property type="gene ID" value="ENSPPYG00000013902.3"/>
</dbReference>
<dbReference type="GeneID" id="100171854"/>
<dbReference type="KEGG" id="pon:100171854"/>
<dbReference type="CTD" id="51246"/>
<dbReference type="eggNOG" id="ENOG502S2Y4">
    <property type="taxonomic scope" value="Eukaryota"/>
</dbReference>
<dbReference type="GeneTree" id="ENSGT00390000008296"/>
<dbReference type="InParanoid" id="Q5RDV6"/>
<dbReference type="OrthoDB" id="9949323at2759"/>
<dbReference type="Proteomes" id="UP000001595">
    <property type="component" value="Chromosome 3"/>
</dbReference>
<dbReference type="GO" id="GO:0005789">
    <property type="term" value="C:endoplasmic reticulum membrane"/>
    <property type="evidence" value="ECO:0007669"/>
    <property type="project" value="UniProtKB-SubCell"/>
</dbReference>
<dbReference type="GO" id="GO:0031965">
    <property type="term" value="C:nuclear membrane"/>
    <property type="evidence" value="ECO:0007669"/>
    <property type="project" value="UniProtKB-SubCell"/>
</dbReference>
<dbReference type="GO" id="GO:0006915">
    <property type="term" value="P:apoptotic process"/>
    <property type="evidence" value="ECO:0007669"/>
    <property type="project" value="UniProtKB-KW"/>
</dbReference>
<dbReference type="InterPro" id="IPR026910">
    <property type="entry name" value="Shisa"/>
</dbReference>
<dbReference type="PANTHER" id="PTHR31395:SF14">
    <property type="entry name" value="PROTEIN SHISA-5"/>
    <property type="match status" value="1"/>
</dbReference>
<dbReference type="PANTHER" id="PTHR31395">
    <property type="entry name" value="SHISA"/>
    <property type="match status" value="1"/>
</dbReference>
<sequence length="137" mass="14502">MGFGATLAVGLTIFVLSVVTIIICFTCSCCCLYKTCRRPRPVVTTTTSTTVVHAPYPQPPSVPPSYPGPSYQGYHTMPPQPGMPAAPYPMQYPPPYPAQPMGPPAYHETLAGGAAAPYPASQPPYNPAYMDAPKAAL</sequence>
<accession>Q5RDV6</accession>
<proteinExistence type="evidence at transcript level"/>
<organism>
    <name type="scientific">Pongo abelii</name>
    <name type="common">Sumatran orangutan</name>
    <name type="synonym">Pongo pygmaeus abelii</name>
    <dbReference type="NCBI Taxonomy" id="9601"/>
    <lineage>
        <taxon>Eukaryota</taxon>
        <taxon>Metazoa</taxon>
        <taxon>Chordata</taxon>
        <taxon>Craniata</taxon>
        <taxon>Vertebrata</taxon>
        <taxon>Euteleostomi</taxon>
        <taxon>Mammalia</taxon>
        <taxon>Eutheria</taxon>
        <taxon>Euarchontoglires</taxon>
        <taxon>Primates</taxon>
        <taxon>Haplorrhini</taxon>
        <taxon>Catarrhini</taxon>
        <taxon>Hominidae</taxon>
        <taxon>Pongo</taxon>
    </lineage>
</organism>
<name>SHSA5_PONAB</name>
<protein>
    <recommendedName>
        <fullName>Protein shisa-5</fullName>
    </recommendedName>
    <alternativeName>
        <fullName>Scotin</fullName>
    </alternativeName>
</protein>
<comment type="function">
    <text evidence="1">Can induce apoptosis in a caspase-dependent manner and plays a role in p53/TP53-dependent apoptosis.</text>
</comment>
<comment type="subunit">
    <text evidence="1">Interacts with PDCD6; PDCD6 can stabilize SHISA5.</text>
</comment>
<comment type="subcellular location">
    <subcellularLocation>
        <location evidence="1">Endoplasmic reticulum membrane</location>
        <topology evidence="1">Single-pass type I membrane protein</topology>
    </subcellularLocation>
    <subcellularLocation>
        <location evidence="1">Nucleus membrane</location>
    </subcellularLocation>
</comment>
<comment type="domain">
    <text evidence="1">The proline-rich region is required for endoplasmic reticulum localization.</text>
</comment>
<comment type="similarity">
    <text evidence="3">Belongs to the shisa family.</text>
</comment>
<gene>
    <name type="primary">SHISA5</name>
    <name type="synonym">SCOTIN</name>
</gene>
<reference key="1">
    <citation type="submission" date="2004-11" db="EMBL/GenBank/DDBJ databases">
        <authorList>
            <consortium name="The German cDNA consortium"/>
        </authorList>
    </citation>
    <scope>NUCLEOTIDE SEQUENCE [LARGE SCALE MRNA]</scope>
    <source>
        <tissue>Kidney</tissue>
    </source>
</reference>
<evidence type="ECO:0000250" key="1"/>
<evidence type="ECO:0000255" key="2"/>
<evidence type="ECO:0000305" key="3"/>
<feature type="chain" id="PRO_0000312880" description="Protein shisa-5">
    <location>
        <begin position="1"/>
        <end position="137"/>
    </location>
</feature>
<feature type="transmembrane region" description="Helical" evidence="2">
    <location>
        <begin position="3"/>
        <end position="23"/>
    </location>
</feature>